<name>RK22_GUIAB</name>
<feature type="chain" id="PRO_0000354574" description="Large ribosomal subunit protein uL22c">
    <location>
        <begin position="1"/>
        <end position="154"/>
    </location>
</feature>
<comment type="function">
    <text evidence="1">This protein binds specifically to 23S rRNA.</text>
</comment>
<comment type="function">
    <text evidence="1">The globular domain of the protein is located near the polypeptide exit tunnel on the outside of the subunit, while an extended beta-hairpin is found that lines the wall of the exit tunnel in the center of the 70S ribosome.</text>
</comment>
<comment type="subunit">
    <text evidence="1">Part of the 50S ribosomal subunit.</text>
</comment>
<comment type="subcellular location">
    <subcellularLocation>
        <location>Plastid</location>
        <location>Chloroplast</location>
    </subcellularLocation>
</comment>
<comment type="similarity">
    <text evidence="2">Belongs to the universal ribosomal protein uL22 family.</text>
</comment>
<sequence>MLNKRTTEVYALGQHISMSAHKARRVIDQIRGRSYEETLIILELMPYRACYPIFKLVYSAAANASSNMGSNEANLVISKAEVNKGTIMKRLKHRARGRSFAIQKPTCHITIVMKDISLDEYIDTDSITWSQNKKKDTTMPYYDMYSNGGTWDKK</sequence>
<proteinExistence type="inferred from homology"/>
<reference key="1">
    <citation type="submission" date="2008-03" db="EMBL/GenBank/DDBJ databases">
        <title>Guizotia abyssinica chloroplast sequenced using Solexa.</title>
        <authorList>
            <person name="Kane N.C."/>
            <person name="Dempewolf H."/>
            <person name="Stewart M.L."/>
            <person name="Cronk Q."/>
            <person name="Rieseberrg L.H."/>
        </authorList>
    </citation>
    <scope>NUCLEOTIDE SEQUENCE [LARGE SCALE GENOMIC DNA]</scope>
    <source>
        <strain>cv. PI 508077</strain>
    </source>
</reference>
<evidence type="ECO:0000250" key="1"/>
<evidence type="ECO:0000305" key="2"/>
<geneLocation type="chloroplast"/>
<protein>
    <recommendedName>
        <fullName evidence="2">Large ribosomal subunit protein uL22c</fullName>
    </recommendedName>
    <alternativeName>
        <fullName>50S ribosomal protein L22, chloroplastic</fullName>
    </alternativeName>
</protein>
<dbReference type="EMBL" id="EU549769">
    <property type="protein sequence ID" value="ACB86566.1"/>
    <property type="molecule type" value="Genomic_DNA"/>
</dbReference>
<dbReference type="RefSeq" id="YP_001837400.1">
    <property type="nucleotide sequence ID" value="NC_010601.1"/>
</dbReference>
<dbReference type="SMR" id="B2LMN3"/>
<dbReference type="GeneID" id="6219190"/>
<dbReference type="GO" id="GO:0009507">
    <property type="term" value="C:chloroplast"/>
    <property type="evidence" value="ECO:0007669"/>
    <property type="project" value="UniProtKB-SubCell"/>
</dbReference>
<dbReference type="GO" id="GO:0015934">
    <property type="term" value="C:large ribosomal subunit"/>
    <property type="evidence" value="ECO:0007669"/>
    <property type="project" value="InterPro"/>
</dbReference>
<dbReference type="GO" id="GO:0019843">
    <property type="term" value="F:rRNA binding"/>
    <property type="evidence" value="ECO:0007669"/>
    <property type="project" value="UniProtKB-UniRule"/>
</dbReference>
<dbReference type="GO" id="GO:0003735">
    <property type="term" value="F:structural constituent of ribosome"/>
    <property type="evidence" value="ECO:0007669"/>
    <property type="project" value="InterPro"/>
</dbReference>
<dbReference type="GO" id="GO:0006412">
    <property type="term" value="P:translation"/>
    <property type="evidence" value="ECO:0007669"/>
    <property type="project" value="UniProtKB-UniRule"/>
</dbReference>
<dbReference type="CDD" id="cd00336">
    <property type="entry name" value="Ribosomal_L22"/>
    <property type="match status" value="1"/>
</dbReference>
<dbReference type="FunFam" id="3.90.470.10:FF:000006">
    <property type="entry name" value="50S ribosomal protein L22, chloroplastic"/>
    <property type="match status" value="1"/>
</dbReference>
<dbReference type="Gene3D" id="3.90.470.10">
    <property type="entry name" value="Ribosomal protein L22/L17"/>
    <property type="match status" value="1"/>
</dbReference>
<dbReference type="HAMAP" id="MF_01331_B">
    <property type="entry name" value="Ribosomal_uL22_B"/>
    <property type="match status" value="1"/>
</dbReference>
<dbReference type="InterPro" id="IPR001063">
    <property type="entry name" value="Ribosomal_uL22"/>
</dbReference>
<dbReference type="InterPro" id="IPR005727">
    <property type="entry name" value="Ribosomal_uL22_bac/chlpt-type"/>
</dbReference>
<dbReference type="InterPro" id="IPR047867">
    <property type="entry name" value="Ribosomal_uL22_bac/org-type"/>
</dbReference>
<dbReference type="InterPro" id="IPR018260">
    <property type="entry name" value="Ribosomal_uL22_CS"/>
</dbReference>
<dbReference type="InterPro" id="IPR036394">
    <property type="entry name" value="Ribosomal_uL22_sf"/>
</dbReference>
<dbReference type="NCBIfam" id="TIGR01044">
    <property type="entry name" value="rplV_bact"/>
    <property type="match status" value="1"/>
</dbReference>
<dbReference type="PANTHER" id="PTHR13501">
    <property type="entry name" value="CHLOROPLAST 50S RIBOSOMAL PROTEIN L22-RELATED"/>
    <property type="match status" value="1"/>
</dbReference>
<dbReference type="PANTHER" id="PTHR13501:SF10">
    <property type="entry name" value="LARGE RIBOSOMAL SUBUNIT PROTEIN UL22M"/>
    <property type="match status" value="1"/>
</dbReference>
<dbReference type="Pfam" id="PF00237">
    <property type="entry name" value="Ribosomal_L22"/>
    <property type="match status" value="1"/>
</dbReference>
<dbReference type="SUPFAM" id="SSF54843">
    <property type="entry name" value="Ribosomal protein L22"/>
    <property type="match status" value="1"/>
</dbReference>
<dbReference type="PROSITE" id="PS00464">
    <property type="entry name" value="RIBOSOMAL_L22"/>
    <property type="match status" value="1"/>
</dbReference>
<keyword id="KW-0150">Chloroplast</keyword>
<keyword id="KW-0934">Plastid</keyword>
<keyword id="KW-0687">Ribonucleoprotein</keyword>
<keyword id="KW-0689">Ribosomal protein</keyword>
<keyword id="KW-0694">RNA-binding</keyword>
<keyword id="KW-0699">rRNA-binding</keyword>
<organism>
    <name type="scientific">Guizotia abyssinica</name>
    <name type="common">Niger</name>
    <name type="synonym">Ramtilla</name>
    <dbReference type="NCBI Taxonomy" id="4230"/>
    <lineage>
        <taxon>Eukaryota</taxon>
        <taxon>Viridiplantae</taxon>
        <taxon>Streptophyta</taxon>
        <taxon>Embryophyta</taxon>
        <taxon>Tracheophyta</taxon>
        <taxon>Spermatophyta</taxon>
        <taxon>Magnoliopsida</taxon>
        <taxon>eudicotyledons</taxon>
        <taxon>Gunneridae</taxon>
        <taxon>Pentapetalae</taxon>
        <taxon>asterids</taxon>
        <taxon>campanulids</taxon>
        <taxon>Asterales</taxon>
        <taxon>Asteraceae</taxon>
        <taxon>Asteroideae</taxon>
        <taxon>Heliantheae alliance</taxon>
        <taxon>Millerieae</taxon>
        <taxon>Guizotia</taxon>
    </lineage>
</organism>
<gene>
    <name type="primary">rpl22</name>
    <name type="ordered locus">GuabCp062</name>
</gene>
<accession>B2LMN3</accession>